<proteinExistence type="inferred from homology"/>
<evidence type="ECO:0000255" key="1">
    <source>
        <dbReference type="HAMAP-Rule" id="MF_01220"/>
    </source>
</evidence>
<keyword id="KW-0021">Allosteric enzyme</keyword>
<keyword id="KW-0067">ATP-binding</keyword>
<keyword id="KW-0963">Cytoplasm</keyword>
<keyword id="KW-0418">Kinase</keyword>
<keyword id="KW-0547">Nucleotide-binding</keyword>
<keyword id="KW-0665">Pyrimidine biosynthesis</keyword>
<keyword id="KW-1185">Reference proteome</keyword>
<keyword id="KW-0808">Transferase</keyword>
<organism>
    <name type="scientific">Staphylococcus saprophyticus subsp. saprophyticus (strain ATCC 15305 / DSM 20229 / NCIMB 8711 / NCTC 7292 / S-41)</name>
    <dbReference type="NCBI Taxonomy" id="342451"/>
    <lineage>
        <taxon>Bacteria</taxon>
        <taxon>Bacillati</taxon>
        <taxon>Bacillota</taxon>
        <taxon>Bacilli</taxon>
        <taxon>Bacillales</taxon>
        <taxon>Staphylococcaceae</taxon>
        <taxon>Staphylococcus</taxon>
    </lineage>
</organism>
<protein>
    <recommendedName>
        <fullName evidence="1">Uridylate kinase</fullName>
        <shortName evidence="1">UK</shortName>
        <ecNumber evidence="1">2.7.4.22</ecNumber>
    </recommendedName>
    <alternativeName>
        <fullName evidence="1">Uridine monophosphate kinase</fullName>
        <shortName evidence="1">UMP kinase</shortName>
        <shortName evidence="1">UMPK</shortName>
    </alternativeName>
</protein>
<feature type="chain" id="PRO_0000143890" description="Uridylate kinase">
    <location>
        <begin position="1"/>
        <end position="240"/>
    </location>
</feature>
<feature type="region of interest" description="Involved in allosteric activation by GTP" evidence="1">
    <location>
        <begin position="21"/>
        <end position="26"/>
    </location>
</feature>
<feature type="binding site" evidence="1">
    <location>
        <begin position="13"/>
        <end position="16"/>
    </location>
    <ligand>
        <name>ATP</name>
        <dbReference type="ChEBI" id="CHEBI:30616"/>
    </ligand>
</feature>
<feature type="binding site" evidence="1">
    <location>
        <position position="55"/>
    </location>
    <ligand>
        <name>UMP</name>
        <dbReference type="ChEBI" id="CHEBI:57865"/>
    </ligand>
</feature>
<feature type="binding site" evidence="1">
    <location>
        <position position="56"/>
    </location>
    <ligand>
        <name>ATP</name>
        <dbReference type="ChEBI" id="CHEBI:30616"/>
    </ligand>
</feature>
<feature type="binding site" evidence="1">
    <location>
        <position position="60"/>
    </location>
    <ligand>
        <name>ATP</name>
        <dbReference type="ChEBI" id="CHEBI:30616"/>
    </ligand>
</feature>
<feature type="binding site" evidence="1">
    <location>
        <position position="75"/>
    </location>
    <ligand>
        <name>UMP</name>
        <dbReference type="ChEBI" id="CHEBI:57865"/>
    </ligand>
</feature>
<feature type="binding site" evidence="1">
    <location>
        <begin position="136"/>
        <end position="143"/>
    </location>
    <ligand>
        <name>UMP</name>
        <dbReference type="ChEBI" id="CHEBI:57865"/>
    </ligand>
</feature>
<feature type="binding site" evidence="1">
    <location>
        <position position="164"/>
    </location>
    <ligand>
        <name>ATP</name>
        <dbReference type="ChEBI" id="CHEBI:30616"/>
    </ligand>
</feature>
<feature type="binding site" evidence="1">
    <location>
        <position position="170"/>
    </location>
    <ligand>
        <name>ATP</name>
        <dbReference type="ChEBI" id="CHEBI:30616"/>
    </ligand>
</feature>
<feature type="binding site" evidence="1">
    <location>
        <position position="173"/>
    </location>
    <ligand>
        <name>ATP</name>
        <dbReference type="ChEBI" id="CHEBI:30616"/>
    </ligand>
</feature>
<sequence length="240" mass="26083">MAQTSKYERVVLKLSGEALAGDDGFGINPIIIKSIAEQVAEVAKLDCEIAVIVGGGNIWRGKTGSDLGMDRGTADYMGMLATVMNALALQDSLEQLECDTRVLTSIEMKQVAEPYIRRRAIRHLEKNRVVIFAAGIGNPYFSTDTTAALRAAEVEADVILMGKNNVDGVYSADPKVDPNAIKYEHLTHIQMLQEGLQVMDSTASSFCMDNNIPLNVFSITEEGNIKRAVMGEKIGTLITK</sequence>
<gene>
    <name evidence="1" type="primary">pyrH</name>
    <name type="ordered locus">SSP1510</name>
</gene>
<reference key="1">
    <citation type="journal article" date="2005" name="Proc. Natl. Acad. Sci. U.S.A.">
        <title>Whole genome sequence of Staphylococcus saprophyticus reveals the pathogenesis of uncomplicated urinary tract infection.</title>
        <authorList>
            <person name="Kuroda M."/>
            <person name="Yamashita A."/>
            <person name="Hirakawa H."/>
            <person name="Kumano M."/>
            <person name="Morikawa K."/>
            <person name="Higashide M."/>
            <person name="Maruyama A."/>
            <person name="Inose Y."/>
            <person name="Matoba K."/>
            <person name="Toh H."/>
            <person name="Kuhara S."/>
            <person name="Hattori M."/>
            <person name="Ohta T."/>
        </authorList>
    </citation>
    <scope>NUCLEOTIDE SEQUENCE [LARGE SCALE GENOMIC DNA]</scope>
    <source>
        <strain>ATCC 15305 / DSM 20229 / NCIMB 8711 / NCTC 7292 / S-41</strain>
    </source>
</reference>
<accession>Q49X43</accession>
<comment type="function">
    <text evidence="1">Catalyzes the reversible phosphorylation of UMP to UDP.</text>
</comment>
<comment type="catalytic activity">
    <reaction evidence="1">
        <text>UMP + ATP = UDP + ADP</text>
        <dbReference type="Rhea" id="RHEA:24400"/>
        <dbReference type="ChEBI" id="CHEBI:30616"/>
        <dbReference type="ChEBI" id="CHEBI:57865"/>
        <dbReference type="ChEBI" id="CHEBI:58223"/>
        <dbReference type="ChEBI" id="CHEBI:456216"/>
        <dbReference type="EC" id="2.7.4.22"/>
    </reaction>
</comment>
<comment type="activity regulation">
    <text evidence="1">Allosterically activated by GTP. Inhibited by UTP.</text>
</comment>
<comment type="pathway">
    <text evidence="1">Pyrimidine metabolism; CTP biosynthesis via de novo pathway; UDP from UMP (UMPK route): step 1/1.</text>
</comment>
<comment type="subunit">
    <text evidence="1">Homohexamer.</text>
</comment>
<comment type="subcellular location">
    <subcellularLocation>
        <location evidence="1">Cytoplasm</location>
    </subcellularLocation>
</comment>
<comment type="similarity">
    <text evidence="1">Belongs to the UMP kinase family.</text>
</comment>
<name>PYRH_STAS1</name>
<dbReference type="EC" id="2.7.4.22" evidence="1"/>
<dbReference type="EMBL" id="AP008934">
    <property type="protein sequence ID" value="BAE18655.1"/>
    <property type="molecule type" value="Genomic_DNA"/>
</dbReference>
<dbReference type="RefSeq" id="WP_002483465.1">
    <property type="nucleotide sequence ID" value="NZ_MTGA01000034.1"/>
</dbReference>
<dbReference type="SMR" id="Q49X43"/>
<dbReference type="GeneID" id="3617252"/>
<dbReference type="KEGG" id="ssp:SSP1510"/>
<dbReference type="eggNOG" id="COG0528">
    <property type="taxonomic scope" value="Bacteria"/>
</dbReference>
<dbReference type="HOGENOM" id="CLU_033861_0_0_9"/>
<dbReference type="OrthoDB" id="9807458at2"/>
<dbReference type="UniPathway" id="UPA00159">
    <property type="reaction ID" value="UER00275"/>
</dbReference>
<dbReference type="Proteomes" id="UP000006371">
    <property type="component" value="Chromosome"/>
</dbReference>
<dbReference type="GO" id="GO:0005737">
    <property type="term" value="C:cytoplasm"/>
    <property type="evidence" value="ECO:0007669"/>
    <property type="project" value="UniProtKB-SubCell"/>
</dbReference>
<dbReference type="GO" id="GO:0005524">
    <property type="term" value="F:ATP binding"/>
    <property type="evidence" value="ECO:0007669"/>
    <property type="project" value="UniProtKB-KW"/>
</dbReference>
<dbReference type="GO" id="GO:0033862">
    <property type="term" value="F:UMP kinase activity"/>
    <property type="evidence" value="ECO:0007669"/>
    <property type="project" value="UniProtKB-EC"/>
</dbReference>
<dbReference type="GO" id="GO:0044210">
    <property type="term" value="P:'de novo' CTP biosynthetic process"/>
    <property type="evidence" value="ECO:0007669"/>
    <property type="project" value="UniProtKB-UniRule"/>
</dbReference>
<dbReference type="GO" id="GO:0006225">
    <property type="term" value="P:UDP biosynthetic process"/>
    <property type="evidence" value="ECO:0007669"/>
    <property type="project" value="TreeGrafter"/>
</dbReference>
<dbReference type="CDD" id="cd04254">
    <property type="entry name" value="AAK_UMPK-PyrH-Ec"/>
    <property type="match status" value="1"/>
</dbReference>
<dbReference type="FunFam" id="3.40.1160.10:FF:000001">
    <property type="entry name" value="Uridylate kinase"/>
    <property type="match status" value="1"/>
</dbReference>
<dbReference type="Gene3D" id="3.40.1160.10">
    <property type="entry name" value="Acetylglutamate kinase-like"/>
    <property type="match status" value="1"/>
</dbReference>
<dbReference type="HAMAP" id="MF_01220_B">
    <property type="entry name" value="PyrH_B"/>
    <property type="match status" value="1"/>
</dbReference>
<dbReference type="InterPro" id="IPR036393">
    <property type="entry name" value="AceGlu_kinase-like_sf"/>
</dbReference>
<dbReference type="InterPro" id="IPR001048">
    <property type="entry name" value="Asp/Glu/Uridylate_kinase"/>
</dbReference>
<dbReference type="InterPro" id="IPR011817">
    <property type="entry name" value="Uridylate_kinase"/>
</dbReference>
<dbReference type="InterPro" id="IPR015963">
    <property type="entry name" value="Uridylate_kinase_bac"/>
</dbReference>
<dbReference type="NCBIfam" id="TIGR02075">
    <property type="entry name" value="pyrH_bact"/>
    <property type="match status" value="1"/>
</dbReference>
<dbReference type="PANTHER" id="PTHR42833">
    <property type="entry name" value="URIDYLATE KINASE"/>
    <property type="match status" value="1"/>
</dbReference>
<dbReference type="PANTHER" id="PTHR42833:SF4">
    <property type="entry name" value="URIDYLATE KINASE PUMPKIN, CHLOROPLASTIC"/>
    <property type="match status" value="1"/>
</dbReference>
<dbReference type="Pfam" id="PF00696">
    <property type="entry name" value="AA_kinase"/>
    <property type="match status" value="1"/>
</dbReference>
<dbReference type="PIRSF" id="PIRSF005650">
    <property type="entry name" value="Uridylate_kin"/>
    <property type="match status" value="1"/>
</dbReference>
<dbReference type="SUPFAM" id="SSF53633">
    <property type="entry name" value="Carbamate kinase-like"/>
    <property type="match status" value="1"/>
</dbReference>